<protein>
    <recommendedName>
        <fullName evidence="1">Deoxyribose-phosphate aldolase</fullName>
        <shortName evidence="1">DERA</shortName>
        <ecNumber evidence="1">4.1.2.4</ecNumber>
    </recommendedName>
    <alternativeName>
        <fullName evidence="1">2-deoxy-D-ribose 5-phosphate aldolase</fullName>
    </alternativeName>
    <alternativeName>
        <fullName evidence="1">Phosphodeoxyriboaldolase</fullName>
        <shortName evidence="1">Deoxyriboaldolase</shortName>
    </alternativeName>
</protein>
<dbReference type="EC" id="4.1.2.4" evidence="1"/>
<dbReference type="EMBL" id="AE009949">
    <property type="protein sequence ID" value="AAL98429.1"/>
    <property type="molecule type" value="Genomic_DNA"/>
</dbReference>
<dbReference type="RefSeq" id="WP_011018205.1">
    <property type="nucleotide sequence ID" value="NC_003485.1"/>
</dbReference>
<dbReference type="SMR" id="P63932"/>
<dbReference type="KEGG" id="spm:spyM18_1931"/>
<dbReference type="HOGENOM" id="CLU_053595_0_2_9"/>
<dbReference type="UniPathway" id="UPA00002">
    <property type="reaction ID" value="UER00468"/>
</dbReference>
<dbReference type="GO" id="GO:0005737">
    <property type="term" value="C:cytoplasm"/>
    <property type="evidence" value="ECO:0007669"/>
    <property type="project" value="UniProtKB-SubCell"/>
</dbReference>
<dbReference type="GO" id="GO:0004139">
    <property type="term" value="F:deoxyribose-phosphate aldolase activity"/>
    <property type="evidence" value="ECO:0007669"/>
    <property type="project" value="UniProtKB-UniRule"/>
</dbReference>
<dbReference type="GO" id="GO:0006018">
    <property type="term" value="P:2-deoxyribose 1-phosphate catabolic process"/>
    <property type="evidence" value="ECO:0007669"/>
    <property type="project" value="UniProtKB-UniRule"/>
</dbReference>
<dbReference type="GO" id="GO:0016052">
    <property type="term" value="P:carbohydrate catabolic process"/>
    <property type="evidence" value="ECO:0007669"/>
    <property type="project" value="TreeGrafter"/>
</dbReference>
<dbReference type="GO" id="GO:0009264">
    <property type="term" value="P:deoxyribonucleotide catabolic process"/>
    <property type="evidence" value="ECO:0007669"/>
    <property type="project" value="InterPro"/>
</dbReference>
<dbReference type="CDD" id="cd00959">
    <property type="entry name" value="DeoC"/>
    <property type="match status" value="1"/>
</dbReference>
<dbReference type="FunFam" id="3.20.20.70:FF:000044">
    <property type="entry name" value="Deoxyribose-phosphate aldolase"/>
    <property type="match status" value="1"/>
</dbReference>
<dbReference type="Gene3D" id="3.20.20.70">
    <property type="entry name" value="Aldolase class I"/>
    <property type="match status" value="1"/>
</dbReference>
<dbReference type="HAMAP" id="MF_00114">
    <property type="entry name" value="DeoC_type1"/>
    <property type="match status" value="1"/>
</dbReference>
<dbReference type="InterPro" id="IPR013785">
    <property type="entry name" value="Aldolase_TIM"/>
</dbReference>
<dbReference type="InterPro" id="IPR011343">
    <property type="entry name" value="DeoC"/>
</dbReference>
<dbReference type="InterPro" id="IPR002915">
    <property type="entry name" value="DeoC/FbaB/LacD_aldolase"/>
</dbReference>
<dbReference type="InterPro" id="IPR028581">
    <property type="entry name" value="DeoC_typeI"/>
</dbReference>
<dbReference type="NCBIfam" id="TIGR00126">
    <property type="entry name" value="deoC"/>
    <property type="match status" value="1"/>
</dbReference>
<dbReference type="PANTHER" id="PTHR10889">
    <property type="entry name" value="DEOXYRIBOSE-PHOSPHATE ALDOLASE"/>
    <property type="match status" value="1"/>
</dbReference>
<dbReference type="PANTHER" id="PTHR10889:SF1">
    <property type="entry name" value="DEOXYRIBOSE-PHOSPHATE ALDOLASE"/>
    <property type="match status" value="1"/>
</dbReference>
<dbReference type="Pfam" id="PF01791">
    <property type="entry name" value="DeoC"/>
    <property type="match status" value="1"/>
</dbReference>
<dbReference type="PIRSF" id="PIRSF001357">
    <property type="entry name" value="DeoC"/>
    <property type="match status" value="1"/>
</dbReference>
<dbReference type="SMART" id="SM01133">
    <property type="entry name" value="DeoC"/>
    <property type="match status" value="1"/>
</dbReference>
<dbReference type="SUPFAM" id="SSF51569">
    <property type="entry name" value="Aldolase"/>
    <property type="match status" value="1"/>
</dbReference>
<sequence>MEVKDILKTVDHTLLATTATWPEIQTILDDAMAYETASACIPASYVKKAAEYVSGKLAICTVIGFPNGYSTTAAKVFECQDAIQNGADEIDMVINLTDVKNGDFDTVEEEIRQIKAKCQDHILKVIVETCQLTKEELIELCGVVTRSGADFIKTSTGFSTAGATFEDVEVMAKYVGEGVKIKAAGGISSLEDAKTFIALGASRLGTSRIIKIVKNEATKPDSY</sequence>
<comment type="function">
    <text evidence="1">Catalyzes a reversible aldol reaction between acetaldehyde and D-glyceraldehyde 3-phosphate to generate 2-deoxy-D-ribose 5-phosphate.</text>
</comment>
<comment type="catalytic activity">
    <reaction evidence="1">
        <text>2-deoxy-D-ribose 5-phosphate = D-glyceraldehyde 3-phosphate + acetaldehyde</text>
        <dbReference type="Rhea" id="RHEA:12821"/>
        <dbReference type="ChEBI" id="CHEBI:15343"/>
        <dbReference type="ChEBI" id="CHEBI:59776"/>
        <dbReference type="ChEBI" id="CHEBI:62877"/>
        <dbReference type="EC" id="4.1.2.4"/>
    </reaction>
</comment>
<comment type="pathway">
    <text evidence="1">Carbohydrate degradation; 2-deoxy-D-ribose 1-phosphate degradation; D-glyceraldehyde 3-phosphate and acetaldehyde from 2-deoxy-alpha-D-ribose 1-phosphate: step 2/2.</text>
</comment>
<comment type="subcellular location">
    <subcellularLocation>
        <location evidence="1">Cytoplasm</location>
    </subcellularLocation>
</comment>
<comment type="similarity">
    <text evidence="1">Belongs to the DeoC/FbaB aldolase family. DeoC type 1 subfamily.</text>
</comment>
<keyword id="KW-0963">Cytoplasm</keyword>
<keyword id="KW-0456">Lyase</keyword>
<keyword id="KW-0704">Schiff base</keyword>
<feature type="chain" id="PRO_0000057277" description="Deoxyribose-phosphate aldolase">
    <location>
        <begin position="1"/>
        <end position="223"/>
    </location>
</feature>
<feature type="active site" description="Proton donor/acceptor" evidence="1">
    <location>
        <position position="91"/>
    </location>
</feature>
<feature type="active site" description="Schiff-base intermediate with acetaldehyde" evidence="1">
    <location>
        <position position="153"/>
    </location>
</feature>
<feature type="active site" description="Proton donor/acceptor" evidence="1">
    <location>
        <position position="182"/>
    </location>
</feature>
<organism>
    <name type="scientific">Streptococcus pyogenes serotype M18 (strain MGAS8232)</name>
    <dbReference type="NCBI Taxonomy" id="186103"/>
    <lineage>
        <taxon>Bacteria</taxon>
        <taxon>Bacillati</taxon>
        <taxon>Bacillota</taxon>
        <taxon>Bacilli</taxon>
        <taxon>Lactobacillales</taxon>
        <taxon>Streptococcaceae</taxon>
        <taxon>Streptococcus</taxon>
    </lineage>
</organism>
<evidence type="ECO:0000255" key="1">
    <source>
        <dbReference type="HAMAP-Rule" id="MF_00114"/>
    </source>
</evidence>
<reference key="1">
    <citation type="journal article" date="2002" name="Proc. Natl. Acad. Sci. U.S.A.">
        <title>Genome sequence and comparative microarray analysis of serotype M18 group A Streptococcus strains associated with acute rheumatic fever outbreaks.</title>
        <authorList>
            <person name="Smoot J.C."/>
            <person name="Barbian K.D."/>
            <person name="Van Gompel J.J."/>
            <person name="Smoot L.M."/>
            <person name="Chaussee M.S."/>
            <person name="Sylva G.L."/>
            <person name="Sturdevant D.E."/>
            <person name="Ricklefs S.M."/>
            <person name="Porcella S.F."/>
            <person name="Parkins L.D."/>
            <person name="Beres S.B."/>
            <person name="Campbell D.S."/>
            <person name="Smith T.M."/>
            <person name="Zhang Q."/>
            <person name="Kapur V."/>
            <person name="Daly J.A."/>
            <person name="Veasy L.G."/>
            <person name="Musser J.M."/>
        </authorList>
    </citation>
    <scope>NUCLEOTIDE SEQUENCE [LARGE SCALE GENOMIC DNA]</scope>
    <source>
        <strain>MGAS8232</strain>
    </source>
</reference>
<gene>
    <name evidence="1" type="primary">deoC</name>
    <name type="ordered locus">spyM18_1931</name>
</gene>
<proteinExistence type="inferred from homology"/>
<accession>P63932</accession>
<accession>Q8NZG9</accession>
<name>DEOC_STRP8</name>